<comment type="function">
    <text evidence="1 2 3">Photoreceptor required for image-forming vision at low light intensity. While most salt water fish species use retinal as chromophore, most freshwater fish use 3-dehydroretinal, or a mixture of retinal and 3-dehydroretinal (By similarity). Light-induced isomerization of 11-cis to all-trans retinal triggers a conformational change that activates signaling via G-proteins. Subsequent receptor phosphorylation mediates displacement of the bound G-protein alpha subunit by arrestin and terminates signaling (By similarity).</text>
</comment>
<comment type="subcellular location">
    <subcellularLocation>
        <location evidence="2">Membrane</location>
        <topology evidence="2">Multi-pass membrane protein</topology>
    </subcellularLocation>
    <subcellularLocation>
        <location evidence="4">Cell projection</location>
        <location evidence="4">Cilium</location>
        <location evidence="4">Photoreceptor outer segment</location>
    </subcellularLocation>
    <text evidence="2">Synthesized in the inner segment (IS) of rod photoreceptor cells before vectorial transport to disk membranes in the rod outer segment (OS) photosensory cilia.</text>
</comment>
<comment type="PTM">
    <text evidence="1">Phosphorylated on some or all of the serine and threonine residues present in the C-terminal region.</text>
</comment>
<comment type="PTM">
    <text evidence="1">Contains one covalently linked retinal chromophore.</text>
</comment>
<comment type="similarity">
    <text evidence="6">Belongs to the G-protein coupled receptor 1 family. Opsin subfamily.</text>
</comment>
<proteinExistence type="evidence at transcript level"/>
<evidence type="ECO:0000250" key="1">
    <source>
        <dbReference type="UniProtKB" id="P02699"/>
    </source>
</evidence>
<evidence type="ECO:0000250" key="2">
    <source>
        <dbReference type="UniProtKB" id="P08100"/>
    </source>
</evidence>
<evidence type="ECO:0000250" key="3">
    <source>
        <dbReference type="UniProtKB" id="P32309"/>
    </source>
</evidence>
<evidence type="ECO:0000250" key="4">
    <source>
        <dbReference type="UniProtKB" id="P35359"/>
    </source>
</evidence>
<evidence type="ECO:0000255" key="5"/>
<evidence type="ECO:0000255" key="6">
    <source>
        <dbReference type="PROSITE-ProRule" id="PRU00521"/>
    </source>
</evidence>
<evidence type="ECO:0000256" key="7">
    <source>
        <dbReference type="SAM" id="MobiDB-lite"/>
    </source>
</evidence>
<evidence type="ECO:0000305" key="8"/>
<reference key="1">
    <citation type="submission" date="1999-01" db="EMBL/GenBank/DDBJ databases">
        <title>Comparative analysis of opsins in Mediterranian coastal fish.</title>
        <authorList>
            <person name="Archer S.N."/>
            <person name="Hirano J."/>
        </authorList>
    </citation>
    <scope>NUCLEOTIDE SEQUENCE [MRNA]</scope>
    <source>
        <tissue>Retina</tissue>
    </source>
</reference>
<feature type="chain" id="PRO_0000197683" description="Rhodopsin">
    <location>
        <begin position="1"/>
        <end position="353"/>
    </location>
</feature>
<feature type="topological domain" description="Extracellular" evidence="8">
    <location>
        <begin position="1"/>
        <end position="36"/>
    </location>
</feature>
<feature type="transmembrane region" description="Helical; Name=1" evidence="1">
    <location>
        <begin position="37"/>
        <end position="61"/>
    </location>
</feature>
<feature type="topological domain" description="Cytoplasmic" evidence="8">
    <location>
        <begin position="62"/>
        <end position="73"/>
    </location>
</feature>
<feature type="transmembrane region" description="Helical; Name=2" evidence="1">
    <location>
        <begin position="74"/>
        <end position="96"/>
    </location>
</feature>
<feature type="topological domain" description="Extracellular" evidence="8">
    <location>
        <begin position="97"/>
        <end position="110"/>
    </location>
</feature>
<feature type="transmembrane region" description="Helical; Name=3" evidence="1">
    <location>
        <begin position="111"/>
        <end position="133"/>
    </location>
</feature>
<feature type="topological domain" description="Cytoplasmic" evidence="8">
    <location>
        <begin position="134"/>
        <end position="152"/>
    </location>
</feature>
<feature type="transmembrane region" description="Helical; Name=4" evidence="1">
    <location>
        <begin position="153"/>
        <end position="173"/>
    </location>
</feature>
<feature type="topological domain" description="Extracellular" evidence="8">
    <location>
        <begin position="174"/>
        <end position="202"/>
    </location>
</feature>
<feature type="transmembrane region" description="Helical; Name=5" evidence="1">
    <location>
        <begin position="203"/>
        <end position="224"/>
    </location>
</feature>
<feature type="topological domain" description="Cytoplasmic" evidence="8">
    <location>
        <begin position="225"/>
        <end position="252"/>
    </location>
</feature>
<feature type="transmembrane region" description="Helical; Name=6" evidence="1">
    <location>
        <begin position="253"/>
        <end position="274"/>
    </location>
</feature>
<feature type="topological domain" description="Extracellular" evidence="8">
    <location>
        <begin position="275"/>
        <end position="286"/>
    </location>
</feature>
<feature type="transmembrane region" description="Helical; Name=7" evidence="1">
    <location>
        <begin position="287"/>
        <end position="308"/>
    </location>
</feature>
<feature type="topological domain" description="Cytoplasmic" evidence="8">
    <location>
        <begin position="309"/>
        <end position="353"/>
    </location>
</feature>
<feature type="region of interest" description="Disordered" evidence="7">
    <location>
        <begin position="330"/>
        <end position="353"/>
    </location>
</feature>
<feature type="short sequence motif" description="'Ionic lock' involved in activated form stabilization" evidence="1">
    <location>
        <begin position="134"/>
        <end position="136"/>
    </location>
</feature>
<feature type="compositionally biased region" description="Low complexity" evidence="7">
    <location>
        <begin position="334"/>
        <end position="353"/>
    </location>
</feature>
<feature type="site" description="Plays an important role in the conformation switch to the active conformation" evidence="1">
    <location>
        <position position="113"/>
    </location>
</feature>
<feature type="modified residue" description="N6-(retinylidene)lysine" evidence="1">
    <location>
        <position position="296"/>
    </location>
</feature>
<feature type="lipid moiety-binding region" description="S-palmitoyl cysteine" evidence="1">
    <location>
        <position position="322"/>
    </location>
</feature>
<feature type="lipid moiety-binding region" description="S-palmitoyl cysteine" evidence="1">
    <location>
        <position position="323"/>
    </location>
</feature>
<feature type="glycosylation site" description="N-linked (GlcNAc...) asparagine" evidence="5">
    <location>
        <position position="2"/>
    </location>
</feature>
<feature type="glycosylation site" description="N-linked (GlcNAc...) asparagine" evidence="5">
    <location>
        <position position="15"/>
    </location>
</feature>
<feature type="glycosylation site" description="N-linked (GlcNAc...) asparagine" evidence="5">
    <location>
        <position position="200"/>
    </location>
</feature>
<feature type="disulfide bond" evidence="6">
    <location>
        <begin position="110"/>
        <end position="187"/>
    </location>
</feature>
<protein>
    <recommendedName>
        <fullName>Rhodopsin</fullName>
    </recommendedName>
</protein>
<dbReference type="EMBL" id="Y18670">
    <property type="protein sequence ID" value="CAA77252.1"/>
    <property type="molecule type" value="mRNA"/>
</dbReference>
<dbReference type="SMR" id="Q9YGZ7"/>
<dbReference type="GlyCosmos" id="Q9YGZ7">
    <property type="glycosylation" value="3 sites, No reported glycans"/>
</dbReference>
<dbReference type="GO" id="GO:0016020">
    <property type="term" value="C:membrane"/>
    <property type="evidence" value="ECO:0000250"/>
    <property type="project" value="UniProtKB"/>
</dbReference>
<dbReference type="GO" id="GO:0097381">
    <property type="term" value="C:photoreceptor disc membrane"/>
    <property type="evidence" value="ECO:0000250"/>
    <property type="project" value="UniProtKB"/>
</dbReference>
<dbReference type="GO" id="GO:0005886">
    <property type="term" value="C:plasma membrane"/>
    <property type="evidence" value="ECO:0000250"/>
    <property type="project" value="UniProtKB"/>
</dbReference>
<dbReference type="GO" id="GO:0005502">
    <property type="term" value="F:11-cis retinal binding"/>
    <property type="evidence" value="ECO:0000250"/>
    <property type="project" value="UniProtKB"/>
</dbReference>
<dbReference type="GO" id="GO:0008020">
    <property type="term" value="F:G protein-coupled photoreceptor activity"/>
    <property type="evidence" value="ECO:0000250"/>
    <property type="project" value="UniProtKB"/>
</dbReference>
<dbReference type="GO" id="GO:0016038">
    <property type="term" value="P:absorption of visible light"/>
    <property type="evidence" value="ECO:0000250"/>
    <property type="project" value="UniProtKB"/>
</dbReference>
<dbReference type="GO" id="GO:0016056">
    <property type="term" value="P:G protein-coupled opsin signaling pathway"/>
    <property type="evidence" value="ECO:0000250"/>
    <property type="project" value="UniProtKB"/>
</dbReference>
<dbReference type="GO" id="GO:0007601">
    <property type="term" value="P:visual perception"/>
    <property type="evidence" value="ECO:0007669"/>
    <property type="project" value="UniProtKB-KW"/>
</dbReference>
<dbReference type="CDD" id="cd15080">
    <property type="entry name" value="7tmA_MWS_opsin"/>
    <property type="match status" value="1"/>
</dbReference>
<dbReference type="FunFam" id="1.20.1070.10:FF:000018">
    <property type="entry name" value="Rhodopsin"/>
    <property type="match status" value="1"/>
</dbReference>
<dbReference type="Gene3D" id="1.20.1070.10">
    <property type="entry name" value="Rhodopsin 7-helix transmembrane proteins"/>
    <property type="match status" value="1"/>
</dbReference>
<dbReference type="InterPro" id="IPR050125">
    <property type="entry name" value="GPCR_opsins"/>
</dbReference>
<dbReference type="InterPro" id="IPR000276">
    <property type="entry name" value="GPCR_Rhodpsn"/>
</dbReference>
<dbReference type="InterPro" id="IPR017452">
    <property type="entry name" value="GPCR_Rhodpsn_7TM"/>
</dbReference>
<dbReference type="InterPro" id="IPR001760">
    <property type="entry name" value="Opsin"/>
</dbReference>
<dbReference type="InterPro" id="IPR027430">
    <property type="entry name" value="Retinal_BS"/>
</dbReference>
<dbReference type="InterPro" id="IPR000732">
    <property type="entry name" value="Rhodopsin"/>
</dbReference>
<dbReference type="InterPro" id="IPR019477">
    <property type="entry name" value="Rhodopsin_N"/>
</dbReference>
<dbReference type="PANTHER" id="PTHR24240">
    <property type="entry name" value="OPSIN"/>
    <property type="match status" value="1"/>
</dbReference>
<dbReference type="Pfam" id="PF00001">
    <property type="entry name" value="7tm_1"/>
    <property type="match status" value="1"/>
</dbReference>
<dbReference type="Pfam" id="PF10413">
    <property type="entry name" value="Rhodopsin_N"/>
    <property type="match status" value="1"/>
</dbReference>
<dbReference type="PRINTS" id="PR00237">
    <property type="entry name" value="GPCRRHODOPSN"/>
</dbReference>
<dbReference type="PRINTS" id="PR00238">
    <property type="entry name" value="OPSIN"/>
</dbReference>
<dbReference type="PRINTS" id="PR00579">
    <property type="entry name" value="RHODOPSIN"/>
</dbReference>
<dbReference type="SUPFAM" id="SSF81321">
    <property type="entry name" value="Family A G protein-coupled receptor-like"/>
    <property type="match status" value="1"/>
</dbReference>
<dbReference type="PROSITE" id="PS00237">
    <property type="entry name" value="G_PROTEIN_RECEP_F1_1"/>
    <property type="match status" value="1"/>
</dbReference>
<dbReference type="PROSITE" id="PS50262">
    <property type="entry name" value="G_PROTEIN_RECEP_F1_2"/>
    <property type="match status" value="1"/>
</dbReference>
<dbReference type="PROSITE" id="PS00238">
    <property type="entry name" value="OPSIN"/>
    <property type="match status" value="1"/>
</dbReference>
<sequence>MNGTEGPYFYIPMVNTTGIVRSPYEYPQYYLVNPAAYAALGAYMFLLILVGFPINFLTLYVTIEHKKLRTPLNYILLNLAVANLFMVFGGFTTTMYTSMHGYFVLGRLGCNLEGFFATLGGEIALWSLVVLAIERWMVVCKPISNFRFGEDHAIMGLAFTWVMAAACAVPPLVGWSRYIPEGMQCSCGIDYYTRAEGFNNESFVIYMFVCHFLIPLVVVFFCYGRLLCAVKEAAAAQQESETTQRAEREVSRMVVIMVVAFLICWCPYAGVAWYIFTHQGSEFGPLFMTFPAFFAKSSSIYNPMIYICMNKQFRHCMITTLCCGKNPFEEEEGASTTSKTEASSVSSSSVSPA</sequence>
<name>OPSD_CHESA</name>
<keyword id="KW-0966">Cell projection</keyword>
<keyword id="KW-0157">Chromophore</keyword>
<keyword id="KW-1015">Disulfide bond</keyword>
<keyword id="KW-0297">G-protein coupled receptor</keyword>
<keyword id="KW-0325">Glycoprotein</keyword>
<keyword id="KW-0449">Lipoprotein</keyword>
<keyword id="KW-0472">Membrane</keyword>
<keyword id="KW-0564">Palmitate</keyword>
<keyword id="KW-0597">Phosphoprotein</keyword>
<keyword id="KW-0600">Photoreceptor protein</keyword>
<keyword id="KW-0675">Receptor</keyword>
<keyword id="KW-0681">Retinal protein</keyword>
<keyword id="KW-0716">Sensory transduction</keyword>
<keyword id="KW-0807">Transducer</keyword>
<keyword id="KW-0812">Transmembrane</keyword>
<keyword id="KW-1133">Transmembrane helix</keyword>
<keyword id="KW-0844">Vision</keyword>
<gene>
    <name type="primary">rho</name>
</gene>
<organism>
    <name type="scientific">Chelon saliens</name>
    <name type="common">Leaping mullet</name>
    <name type="synonym">Liza saliens</name>
    <dbReference type="NCBI Taxonomy" id="48192"/>
    <lineage>
        <taxon>Eukaryota</taxon>
        <taxon>Metazoa</taxon>
        <taxon>Chordata</taxon>
        <taxon>Craniata</taxon>
        <taxon>Vertebrata</taxon>
        <taxon>Euteleostomi</taxon>
        <taxon>Actinopterygii</taxon>
        <taxon>Neopterygii</taxon>
        <taxon>Teleostei</taxon>
        <taxon>Neoteleostei</taxon>
        <taxon>Acanthomorphata</taxon>
        <taxon>Ovalentaria</taxon>
        <taxon>Mugilomorphae</taxon>
        <taxon>Mugilidae</taxon>
        <taxon>Chelon</taxon>
    </lineage>
</organism>
<accession>Q9YGZ7</accession>